<feature type="chain" id="PRO_0000300658" description="Low molecular weight protein-tyrosine-phosphatase PtpA">
    <location>
        <begin position="1"/>
        <end position="154"/>
    </location>
</feature>
<feature type="active site" description="Nucleophile" evidence="2">
    <location>
        <position position="8"/>
    </location>
</feature>
<feature type="active site" evidence="2">
    <location>
        <position position="14"/>
    </location>
</feature>
<feature type="active site" description="Proton donor" evidence="2">
    <location>
        <position position="120"/>
    </location>
</feature>
<protein>
    <recommendedName>
        <fullName>Low molecular weight protein-tyrosine-phosphatase PtpA</fullName>
        <ecNumber>3.1.3.48</ecNumber>
    </recommendedName>
    <alternativeName>
        <fullName>Phosphotyrosine phosphatase A</fullName>
        <shortName>PTPase A</shortName>
    </alternativeName>
</protein>
<reference key="1">
    <citation type="journal article" date="2005" name="J. Bacteriol.">
        <title>Insights on evolution of virulence and resistance from the complete genome analysis of an early methicillin-resistant Staphylococcus aureus strain and a biofilm-producing methicillin-resistant Staphylococcus epidermidis strain.</title>
        <authorList>
            <person name="Gill S.R."/>
            <person name="Fouts D.E."/>
            <person name="Archer G.L."/>
            <person name="Mongodin E.F."/>
            <person name="DeBoy R.T."/>
            <person name="Ravel J."/>
            <person name="Paulsen I.T."/>
            <person name="Kolonay J.F."/>
            <person name="Brinkac L.M."/>
            <person name="Beanan M.J."/>
            <person name="Dodson R.J."/>
            <person name="Daugherty S.C."/>
            <person name="Madupu R."/>
            <person name="Angiuoli S.V."/>
            <person name="Durkin A.S."/>
            <person name="Haft D.H."/>
            <person name="Vamathevan J.J."/>
            <person name="Khouri H."/>
            <person name="Utterback T.R."/>
            <person name="Lee C."/>
            <person name="Dimitrov G."/>
            <person name="Jiang L."/>
            <person name="Qin H."/>
            <person name="Weidman J."/>
            <person name="Tran K."/>
            <person name="Kang K.H."/>
            <person name="Hance I.R."/>
            <person name="Nelson K.E."/>
            <person name="Fraser C.M."/>
        </authorList>
    </citation>
    <scope>NUCLEOTIDE SEQUENCE [LARGE SCALE GENOMIC DNA]</scope>
    <source>
        <strain>COL</strain>
    </source>
</reference>
<dbReference type="EC" id="3.1.3.48"/>
<dbReference type="EMBL" id="CP000046">
    <property type="protein sequence ID" value="AAW38380.1"/>
    <property type="molecule type" value="Genomic_DNA"/>
</dbReference>
<dbReference type="RefSeq" id="WP_000228666.1">
    <property type="nucleotide sequence ID" value="NZ_JBGOFO010000006.1"/>
</dbReference>
<dbReference type="SMR" id="Q5HEP3"/>
<dbReference type="KEGG" id="sac:SACOL1939"/>
<dbReference type="HOGENOM" id="CLU_071415_2_3_9"/>
<dbReference type="Proteomes" id="UP000000530">
    <property type="component" value="Chromosome"/>
</dbReference>
<dbReference type="GO" id="GO:0005576">
    <property type="term" value="C:extracellular region"/>
    <property type="evidence" value="ECO:0007669"/>
    <property type="project" value="UniProtKB-SubCell"/>
</dbReference>
<dbReference type="GO" id="GO:0004725">
    <property type="term" value="F:protein tyrosine phosphatase activity"/>
    <property type="evidence" value="ECO:0007669"/>
    <property type="project" value="UniProtKB-EC"/>
</dbReference>
<dbReference type="CDD" id="cd16343">
    <property type="entry name" value="LMWPTP"/>
    <property type="match status" value="1"/>
</dbReference>
<dbReference type="FunFam" id="3.40.50.2300:FF:000268">
    <property type="entry name" value="Low molecular weight protein-tyrosine-phosphatase PtpA"/>
    <property type="match status" value="1"/>
</dbReference>
<dbReference type="Gene3D" id="3.40.50.2300">
    <property type="match status" value="1"/>
</dbReference>
<dbReference type="InterPro" id="IPR050438">
    <property type="entry name" value="LMW_PTPase"/>
</dbReference>
<dbReference type="InterPro" id="IPR023485">
    <property type="entry name" value="Ptyr_pPase"/>
</dbReference>
<dbReference type="InterPro" id="IPR036196">
    <property type="entry name" value="Ptyr_pPase_sf"/>
</dbReference>
<dbReference type="InterPro" id="IPR017867">
    <property type="entry name" value="Tyr_phospatase_low_mol_wt"/>
</dbReference>
<dbReference type="PANTHER" id="PTHR11717:SF7">
    <property type="entry name" value="LOW MOLECULAR WEIGHT PHOSPHOTYROSINE PROTEIN PHOSPHATASE"/>
    <property type="match status" value="1"/>
</dbReference>
<dbReference type="PANTHER" id="PTHR11717">
    <property type="entry name" value="LOW MOLECULAR WEIGHT PROTEIN TYROSINE PHOSPHATASE"/>
    <property type="match status" value="1"/>
</dbReference>
<dbReference type="Pfam" id="PF01451">
    <property type="entry name" value="LMWPc"/>
    <property type="match status" value="1"/>
</dbReference>
<dbReference type="PRINTS" id="PR00719">
    <property type="entry name" value="LMWPTPASE"/>
</dbReference>
<dbReference type="SMART" id="SM00226">
    <property type="entry name" value="LMWPc"/>
    <property type="match status" value="1"/>
</dbReference>
<dbReference type="SUPFAM" id="SSF52788">
    <property type="entry name" value="Phosphotyrosine protein phosphatases I"/>
    <property type="match status" value="1"/>
</dbReference>
<gene>
    <name type="primary">ptpA</name>
    <name type="ordered locus">SACOL1939</name>
</gene>
<organism>
    <name type="scientific">Staphylococcus aureus (strain COL)</name>
    <dbReference type="NCBI Taxonomy" id="93062"/>
    <lineage>
        <taxon>Bacteria</taxon>
        <taxon>Bacillati</taxon>
        <taxon>Bacillota</taxon>
        <taxon>Bacilli</taxon>
        <taxon>Bacillales</taxon>
        <taxon>Staphylococcaceae</taxon>
        <taxon>Staphylococcus</taxon>
    </lineage>
</organism>
<proteinExistence type="inferred from homology"/>
<evidence type="ECO:0000250" key="1">
    <source>
        <dbReference type="UniProtKB" id="A0A0H3K9F2"/>
    </source>
</evidence>
<evidence type="ECO:0000250" key="2">
    <source>
        <dbReference type="UniProtKB" id="P11064"/>
    </source>
</evidence>
<evidence type="ECO:0000305" key="3"/>
<sequence>MVDVAFVCLGNICRSPMAEAIMRQRLKDRNIHDIKVHSRGTGSWNLGEPPHEGTQKILNKHNIPFDGMISELFEATDDFDYIVAMDQSNVDNIKSINPNLKGQLFKLLEFSNMEESDVPDPYYTNNFEGVYDMVLSSCDNLIDYIVKDANLKEG</sequence>
<comment type="function">
    <text evidence="1">Secreted tyrosine phosphatase that plays a critical role during infection as a bacterial effector protein that counteracts host defenses. Required for intramacrophage survival.</text>
</comment>
<comment type="catalytic activity">
    <reaction evidence="1">
        <text>O-phospho-L-tyrosyl-[protein] + H2O = L-tyrosyl-[protein] + phosphate</text>
        <dbReference type="Rhea" id="RHEA:10684"/>
        <dbReference type="Rhea" id="RHEA-COMP:10136"/>
        <dbReference type="Rhea" id="RHEA-COMP:20101"/>
        <dbReference type="ChEBI" id="CHEBI:15377"/>
        <dbReference type="ChEBI" id="CHEBI:43474"/>
        <dbReference type="ChEBI" id="CHEBI:46858"/>
        <dbReference type="ChEBI" id="CHEBI:61978"/>
        <dbReference type="EC" id="3.1.3.48"/>
    </reaction>
</comment>
<comment type="subunit">
    <text evidence="1">Interacts with host CORO1A.</text>
</comment>
<comment type="subcellular location">
    <subcellularLocation>
        <location evidence="1">Secreted</location>
    </subcellularLocation>
    <text evidence="1">Secreted intracellularly upon bacterial infection of macrophages.</text>
</comment>
<comment type="PTM">
    <text evidence="1">Phosphorylations at Tyr-122 and Tyr-123 are essential for phosphatase activity.</text>
</comment>
<comment type="similarity">
    <text evidence="3">Belongs to the low molecular weight phosphotyrosine protein phosphatase family.</text>
</comment>
<keyword id="KW-0378">Hydrolase</keyword>
<keyword id="KW-0597">Phosphoprotein</keyword>
<keyword id="KW-0904">Protein phosphatase</keyword>
<keyword id="KW-0964">Secreted</keyword>
<accession>Q5HEP3</accession>
<name>PTPA_STAAC</name>